<evidence type="ECO:0000255" key="1">
    <source>
        <dbReference type="HAMAP-Rule" id="MF_01234"/>
    </source>
</evidence>
<feature type="chain" id="PRO_1000139686" description="N-acetylmannosamine kinase">
    <location>
        <begin position="1"/>
        <end position="291"/>
    </location>
</feature>
<feature type="binding site" evidence="1">
    <location>
        <begin position="5"/>
        <end position="12"/>
    </location>
    <ligand>
        <name>ATP</name>
        <dbReference type="ChEBI" id="CHEBI:30616"/>
    </ligand>
</feature>
<feature type="binding site" evidence="1">
    <location>
        <begin position="132"/>
        <end position="139"/>
    </location>
    <ligand>
        <name>ATP</name>
        <dbReference type="ChEBI" id="CHEBI:30616"/>
    </ligand>
</feature>
<feature type="binding site" evidence="1">
    <location>
        <position position="156"/>
    </location>
    <ligand>
        <name>Zn(2+)</name>
        <dbReference type="ChEBI" id="CHEBI:29105"/>
    </ligand>
</feature>
<feature type="binding site" evidence="1">
    <location>
        <position position="166"/>
    </location>
    <ligand>
        <name>Zn(2+)</name>
        <dbReference type="ChEBI" id="CHEBI:29105"/>
    </ligand>
</feature>
<feature type="binding site" evidence="1">
    <location>
        <position position="168"/>
    </location>
    <ligand>
        <name>Zn(2+)</name>
        <dbReference type="ChEBI" id="CHEBI:29105"/>
    </ligand>
</feature>
<feature type="binding site" evidence="1">
    <location>
        <position position="173"/>
    </location>
    <ligand>
        <name>Zn(2+)</name>
        <dbReference type="ChEBI" id="CHEBI:29105"/>
    </ligand>
</feature>
<keyword id="KW-0067">ATP-binding</keyword>
<keyword id="KW-0119">Carbohydrate metabolism</keyword>
<keyword id="KW-0418">Kinase</keyword>
<keyword id="KW-0479">Metal-binding</keyword>
<keyword id="KW-0547">Nucleotide-binding</keyword>
<keyword id="KW-0808">Transferase</keyword>
<keyword id="KW-0862">Zinc</keyword>
<name>NANK_ECOSM</name>
<dbReference type="EC" id="2.7.1.60" evidence="1"/>
<dbReference type="EMBL" id="CP000970">
    <property type="protein sequence ID" value="ACB18971.1"/>
    <property type="molecule type" value="Genomic_DNA"/>
</dbReference>
<dbReference type="RefSeq" id="WP_000209036.1">
    <property type="nucleotide sequence ID" value="NC_010498.1"/>
</dbReference>
<dbReference type="SMR" id="B1LGI7"/>
<dbReference type="KEGG" id="ecm:EcSMS35_3517"/>
<dbReference type="HOGENOM" id="CLU_036604_0_4_6"/>
<dbReference type="UniPathway" id="UPA00629">
    <property type="reaction ID" value="UER00681"/>
</dbReference>
<dbReference type="Proteomes" id="UP000007011">
    <property type="component" value="Chromosome"/>
</dbReference>
<dbReference type="GO" id="GO:0005524">
    <property type="term" value="F:ATP binding"/>
    <property type="evidence" value="ECO:0007669"/>
    <property type="project" value="UniProtKB-UniRule"/>
</dbReference>
<dbReference type="GO" id="GO:0009384">
    <property type="term" value="F:N-acylmannosamine kinase activity"/>
    <property type="evidence" value="ECO:0007669"/>
    <property type="project" value="UniProtKB-UniRule"/>
</dbReference>
<dbReference type="GO" id="GO:0008270">
    <property type="term" value="F:zinc ion binding"/>
    <property type="evidence" value="ECO:0007669"/>
    <property type="project" value="UniProtKB-UniRule"/>
</dbReference>
<dbReference type="GO" id="GO:0019262">
    <property type="term" value="P:N-acetylneuraminate catabolic process"/>
    <property type="evidence" value="ECO:0007669"/>
    <property type="project" value="UniProtKB-UniRule"/>
</dbReference>
<dbReference type="CDD" id="cd24069">
    <property type="entry name" value="ASKHA_NBD_ROK_EcNanK-like"/>
    <property type="match status" value="1"/>
</dbReference>
<dbReference type="FunFam" id="3.30.420.40:FF:000062">
    <property type="entry name" value="N-acetylmannosamine kinase"/>
    <property type="match status" value="1"/>
</dbReference>
<dbReference type="FunFam" id="3.30.420.40:FF:000063">
    <property type="entry name" value="N-acetylmannosamine kinase"/>
    <property type="match status" value="1"/>
</dbReference>
<dbReference type="Gene3D" id="3.30.420.40">
    <property type="match status" value="2"/>
</dbReference>
<dbReference type="HAMAP" id="MF_01234">
    <property type="entry name" value="ManNAc_kinase"/>
    <property type="match status" value="1"/>
</dbReference>
<dbReference type="InterPro" id="IPR043129">
    <property type="entry name" value="ATPase_NBD"/>
</dbReference>
<dbReference type="InterPro" id="IPR023945">
    <property type="entry name" value="ManNAc_kinase_bac"/>
</dbReference>
<dbReference type="InterPro" id="IPR000600">
    <property type="entry name" value="ROK"/>
</dbReference>
<dbReference type="InterPro" id="IPR049874">
    <property type="entry name" value="ROK_cs"/>
</dbReference>
<dbReference type="NCBIfam" id="NF047821">
    <property type="entry name" value="NactlManKinNanK"/>
    <property type="match status" value="1"/>
</dbReference>
<dbReference type="NCBIfam" id="NF003461">
    <property type="entry name" value="PRK05082.1"/>
    <property type="match status" value="1"/>
</dbReference>
<dbReference type="PANTHER" id="PTHR18964:SF169">
    <property type="entry name" value="N-ACETYLMANNOSAMINE KINASE"/>
    <property type="match status" value="1"/>
</dbReference>
<dbReference type="PANTHER" id="PTHR18964">
    <property type="entry name" value="ROK (REPRESSOR, ORF, KINASE) FAMILY"/>
    <property type="match status" value="1"/>
</dbReference>
<dbReference type="Pfam" id="PF00480">
    <property type="entry name" value="ROK"/>
    <property type="match status" value="1"/>
</dbReference>
<dbReference type="SUPFAM" id="SSF53067">
    <property type="entry name" value="Actin-like ATPase domain"/>
    <property type="match status" value="1"/>
</dbReference>
<dbReference type="PROSITE" id="PS01125">
    <property type="entry name" value="ROK"/>
    <property type="match status" value="1"/>
</dbReference>
<proteinExistence type="inferred from homology"/>
<reference key="1">
    <citation type="journal article" date="2008" name="J. Bacteriol.">
        <title>Insights into the environmental resistance gene pool from the genome sequence of the multidrug-resistant environmental isolate Escherichia coli SMS-3-5.</title>
        <authorList>
            <person name="Fricke W.F."/>
            <person name="Wright M.S."/>
            <person name="Lindell A.H."/>
            <person name="Harkins D.M."/>
            <person name="Baker-Austin C."/>
            <person name="Ravel J."/>
            <person name="Stepanauskas R."/>
        </authorList>
    </citation>
    <scope>NUCLEOTIDE SEQUENCE [LARGE SCALE GENOMIC DNA]</scope>
    <source>
        <strain>SMS-3-5 / SECEC</strain>
    </source>
</reference>
<organism>
    <name type="scientific">Escherichia coli (strain SMS-3-5 / SECEC)</name>
    <dbReference type="NCBI Taxonomy" id="439855"/>
    <lineage>
        <taxon>Bacteria</taxon>
        <taxon>Pseudomonadati</taxon>
        <taxon>Pseudomonadota</taxon>
        <taxon>Gammaproteobacteria</taxon>
        <taxon>Enterobacterales</taxon>
        <taxon>Enterobacteriaceae</taxon>
        <taxon>Escherichia</taxon>
    </lineage>
</organism>
<gene>
    <name evidence="1" type="primary">nanK</name>
    <name type="ordered locus">EcSMS35_3517</name>
</gene>
<accession>B1LGI7</accession>
<protein>
    <recommendedName>
        <fullName evidence="1">N-acetylmannosamine kinase</fullName>
        <ecNumber evidence="1">2.7.1.60</ecNumber>
    </recommendedName>
    <alternativeName>
        <fullName evidence="1">ManNAc kinase</fullName>
    </alternativeName>
    <alternativeName>
        <fullName evidence="1">N-acetyl-D-mannosamine kinase</fullName>
    </alternativeName>
</protein>
<sequence>MTTLAIDIGGTKLAAALIGADGQIRDRRELPTPASQTPEALRDALSALVSPLQVHAQRVAIASTGIIRDGSLLALNPHNLGGLLHFPLVKTLEQLTDLPTIAINDAQAAAWAEYQALEGDITEMVFITVSTGVGGGVVSGGKLLTGPGGLAGHIGHTLADPHGPVCGCGRTGCVEAIASGRGIAAAAQGELAGANAKTIFTHAGQGDEQAQQLIHRSARTLARLIADIKATTDCQCVVVGGSVGLAEGYLALVETYLAQEPAAFHVDLLAAHYRHDAGLLGAALLAQGEKL</sequence>
<comment type="function">
    <text evidence="1">Catalyzes the phosphorylation of N-acetylmannosamine (ManNAc) to ManNAc-6-P.</text>
</comment>
<comment type="catalytic activity">
    <reaction evidence="1">
        <text>an N-acyl-D-mannosamine + ATP = an N-acyl-D-mannosamine 6-phosphate + ADP + H(+)</text>
        <dbReference type="Rhea" id="RHEA:23832"/>
        <dbReference type="ChEBI" id="CHEBI:15378"/>
        <dbReference type="ChEBI" id="CHEBI:16062"/>
        <dbReference type="ChEBI" id="CHEBI:30616"/>
        <dbReference type="ChEBI" id="CHEBI:57666"/>
        <dbReference type="ChEBI" id="CHEBI:456216"/>
        <dbReference type="EC" id="2.7.1.60"/>
    </reaction>
</comment>
<comment type="pathway">
    <text evidence="1">Amino-sugar metabolism; N-acetylneuraminate degradation; D-fructose 6-phosphate from N-acetylneuraminate: step 2/5.</text>
</comment>
<comment type="subunit">
    <text evidence="1">Homodimer.</text>
</comment>
<comment type="similarity">
    <text evidence="1">Belongs to the ROK (NagC/XylR) family. NanK subfamily.</text>
</comment>